<gene>
    <name evidence="1" type="primary">gatA</name>
    <name type="ordered locus">SAHV_1885</name>
</gene>
<accession>A7X427</accession>
<keyword id="KW-0067">ATP-binding</keyword>
<keyword id="KW-0436">Ligase</keyword>
<keyword id="KW-0547">Nucleotide-binding</keyword>
<keyword id="KW-0648">Protein biosynthesis</keyword>
<comment type="function">
    <text evidence="1">Allows the formation of correctly charged Gln-tRNA(Gln) through the transamidation of misacylated Glu-tRNA(Gln) in organisms which lack glutaminyl-tRNA synthetase. The reaction takes place in the presence of glutamine and ATP through an activated gamma-phospho-Glu-tRNA(Gln).</text>
</comment>
<comment type="catalytic activity">
    <reaction evidence="1">
        <text>L-glutamyl-tRNA(Gln) + L-glutamine + ATP + H2O = L-glutaminyl-tRNA(Gln) + L-glutamate + ADP + phosphate + H(+)</text>
        <dbReference type="Rhea" id="RHEA:17521"/>
        <dbReference type="Rhea" id="RHEA-COMP:9681"/>
        <dbReference type="Rhea" id="RHEA-COMP:9684"/>
        <dbReference type="ChEBI" id="CHEBI:15377"/>
        <dbReference type="ChEBI" id="CHEBI:15378"/>
        <dbReference type="ChEBI" id="CHEBI:29985"/>
        <dbReference type="ChEBI" id="CHEBI:30616"/>
        <dbReference type="ChEBI" id="CHEBI:43474"/>
        <dbReference type="ChEBI" id="CHEBI:58359"/>
        <dbReference type="ChEBI" id="CHEBI:78520"/>
        <dbReference type="ChEBI" id="CHEBI:78521"/>
        <dbReference type="ChEBI" id="CHEBI:456216"/>
        <dbReference type="EC" id="6.3.5.7"/>
    </reaction>
</comment>
<comment type="subunit">
    <text evidence="1">Heterotrimer of A, B and C subunits.</text>
</comment>
<comment type="similarity">
    <text evidence="1">Belongs to the amidase family. GatA subfamily.</text>
</comment>
<evidence type="ECO:0000255" key="1">
    <source>
        <dbReference type="HAMAP-Rule" id="MF_00120"/>
    </source>
</evidence>
<reference key="1">
    <citation type="journal article" date="2008" name="Antimicrob. Agents Chemother.">
        <title>Mutated response regulator graR is responsible for phenotypic conversion of Staphylococcus aureus from heterogeneous vancomycin-intermediate resistance to vancomycin-intermediate resistance.</title>
        <authorList>
            <person name="Neoh H.-M."/>
            <person name="Cui L."/>
            <person name="Yuzawa H."/>
            <person name="Takeuchi F."/>
            <person name="Matsuo M."/>
            <person name="Hiramatsu K."/>
        </authorList>
    </citation>
    <scope>NUCLEOTIDE SEQUENCE [LARGE SCALE GENOMIC DNA]</scope>
    <source>
        <strain>Mu3 / ATCC 700698</strain>
    </source>
</reference>
<sequence length="485" mass="52801">MSIRYESVENLLTLIKDKKIKPSDVVKDIYDAIEETDPTIKSFLALDKENAIKKAQELDELQAKDQMDGKLFGIPMGIKDNIITNGLETTCASKMLEGFVPIYESTVMEKLHKENAVLIGKLNMDEFAMGGSTETSYFKKTVNPFDHKAVPGGSSGGSAAAVAAGLVPLSLGSDTGGSIRQPAAYCGVVGMKPTYGRVSRFGLVAFASSLDQIGPLTRNVKDNAIVLEAISGADVNDSTSAPVDDVDFTSEIGKDIKGLKVALPKEYLGEGVADDVKEAVQNAVETLKSLGAVVEEVSLPNTKFGIPSYYVIASSEASSNLSRFDGIRYGYHSKEAHSLEELYKMSRSEGFGKEVKRRIFLGTFALSSGYYDAYYKKSQKVRTLIKNDFDKVFENYDVVVGPTAPTTAFNLGEEIDDPLTMYANDLLTTPVNLAGLPGISVPCGQSNGRPIGLQFIGKPFDEKTLYRVAYQYETQYNLHDVYEKL</sequence>
<organism>
    <name type="scientific">Staphylococcus aureus (strain Mu3 / ATCC 700698)</name>
    <dbReference type="NCBI Taxonomy" id="418127"/>
    <lineage>
        <taxon>Bacteria</taxon>
        <taxon>Bacillati</taxon>
        <taxon>Bacillota</taxon>
        <taxon>Bacilli</taxon>
        <taxon>Bacillales</taxon>
        <taxon>Staphylococcaceae</taxon>
        <taxon>Staphylococcus</taxon>
    </lineage>
</organism>
<name>GATA_STAA1</name>
<protein>
    <recommendedName>
        <fullName evidence="1">Glutamyl-tRNA(Gln) amidotransferase subunit A</fullName>
        <shortName evidence="1">Glu-ADT subunit A</shortName>
        <ecNumber evidence="1">6.3.5.7</ecNumber>
    </recommendedName>
</protein>
<feature type="chain" id="PRO_1000015908" description="Glutamyl-tRNA(Gln) amidotransferase subunit A">
    <location>
        <begin position="1"/>
        <end position="485"/>
    </location>
</feature>
<feature type="active site" description="Charge relay system" evidence="1">
    <location>
        <position position="79"/>
    </location>
</feature>
<feature type="active site" description="Charge relay system" evidence="1">
    <location>
        <position position="154"/>
    </location>
</feature>
<feature type="active site" description="Acyl-ester intermediate" evidence="1">
    <location>
        <position position="178"/>
    </location>
</feature>
<proteinExistence type="inferred from homology"/>
<dbReference type="EC" id="6.3.5.7" evidence="1"/>
<dbReference type="EMBL" id="AP009324">
    <property type="protein sequence ID" value="BAF78768.1"/>
    <property type="molecule type" value="Genomic_DNA"/>
</dbReference>
<dbReference type="RefSeq" id="WP_000027919.1">
    <property type="nucleotide sequence ID" value="NC_009782.1"/>
</dbReference>
<dbReference type="SMR" id="A7X427"/>
<dbReference type="KEGG" id="saw:SAHV_1885"/>
<dbReference type="HOGENOM" id="CLU_009600_0_3_9"/>
<dbReference type="GO" id="GO:0030956">
    <property type="term" value="C:glutamyl-tRNA(Gln) amidotransferase complex"/>
    <property type="evidence" value="ECO:0007669"/>
    <property type="project" value="InterPro"/>
</dbReference>
<dbReference type="GO" id="GO:0005524">
    <property type="term" value="F:ATP binding"/>
    <property type="evidence" value="ECO:0007669"/>
    <property type="project" value="UniProtKB-KW"/>
</dbReference>
<dbReference type="GO" id="GO:0050567">
    <property type="term" value="F:glutaminyl-tRNA synthase (glutamine-hydrolyzing) activity"/>
    <property type="evidence" value="ECO:0007669"/>
    <property type="project" value="UniProtKB-UniRule"/>
</dbReference>
<dbReference type="GO" id="GO:0006412">
    <property type="term" value="P:translation"/>
    <property type="evidence" value="ECO:0007669"/>
    <property type="project" value="UniProtKB-UniRule"/>
</dbReference>
<dbReference type="Gene3D" id="3.90.1300.10">
    <property type="entry name" value="Amidase signature (AS) domain"/>
    <property type="match status" value="1"/>
</dbReference>
<dbReference type="HAMAP" id="MF_00120">
    <property type="entry name" value="GatA"/>
    <property type="match status" value="1"/>
</dbReference>
<dbReference type="InterPro" id="IPR000120">
    <property type="entry name" value="Amidase"/>
</dbReference>
<dbReference type="InterPro" id="IPR020556">
    <property type="entry name" value="Amidase_CS"/>
</dbReference>
<dbReference type="InterPro" id="IPR023631">
    <property type="entry name" value="Amidase_dom"/>
</dbReference>
<dbReference type="InterPro" id="IPR036928">
    <property type="entry name" value="AS_sf"/>
</dbReference>
<dbReference type="InterPro" id="IPR004412">
    <property type="entry name" value="GatA"/>
</dbReference>
<dbReference type="NCBIfam" id="TIGR00132">
    <property type="entry name" value="gatA"/>
    <property type="match status" value="1"/>
</dbReference>
<dbReference type="PANTHER" id="PTHR11895:SF151">
    <property type="entry name" value="GLUTAMYL-TRNA(GLN) AMIDOTRANSFERASE SUBUNIT A"/>
    <property type="match status" value="1"/>
</dbReference>
<dbReference type="PANTHER" id="PTHR11895">
    <property type="entry name" value="TRANSAMIDASE"/>
    <property type="match status" value="1"/>
</dbReference>
<dbReference type="Pfam" id="PF01425">
    <property type="entry name" value="Amidase"/>
    <property type="match status" value="1"/>
</dbReference>
<dbReference type="SUPFAM" id="SSF75304">
    <property type="entry name" value="Amidase signature (AS) enzymes"/>
    <property type="match status" value="1"/>
</dbReference>
<dbReference type="PROSITE" id="PS00571">
    <property type="entry name" value="AMIDASES"/>
    <property type="match status" value="1"/>
</dbReference>